<evidence type="ECO:0000255" key="1">
    <source>
        <dbReference type="HAMAP-Rule" id="MF_01315"/>
    </source>
</evidence>
<evidence type="ECO:0000256" key="2">
    <source>
        <dbReference type="SAM" id="MobiDB-lite"/>
    </source>
</evidence>
<evidence type="ECO:0000305" key="3"/>
<organism>
    <name type="scientific">Limosilactobacillus reuteri subsp. reuteri (strain JCM 1112)</name>
    <name type="common">Lactobacillus reuteri</name>
    <dbReference type="NCBI Taxonomy" id="557433"/>
    <lineage>
        <taxon>Bacteria</taxon>
        <taxon>Bacillati</taxon>
        <taxon>Bacillota</taxon>
        <taxon>Bacilli</taxon>
        <taxon>Lactobacillales</taxon>
        <taxon>Lactobacillaceae</taxon>
        <taxon>Limosilactobacillus</taxon>
    </lineage>
</organism>
<protein>
    <recommendedName>
        <fullName evidence="1">Small ribosomal subunit protein uS13</fullName>
    </recommendedName>
    <alternativeName>
        <fullName evidence="3">30S ribosomal protein S13</fullName>
    </alternativeName>
</protein>
<keyword id="KW-0687">Ribonucleoprotein</keyword>
<keyword id="KW-0689">Ribosomal protein</keyword>
<keyword id="KW-0694">RNA-binding</keyword>
<keyword id="KW-0699">rRNA-binding</keyword>
<keyword id="KW-0820">tRNA-binding</keyword>
<sequence>MARIAGVDLPRDKRIVIGLTYIFGIGDSTAKKILENAGVSEDIRVRDLTPDQEEKIRAQVDQIQVEGDLRREVSMNIKRLQEIGSYRGMRHRRGLPVRGQHTKNNARTRKGKAVAIANKKK</sequence>
<gene>
    <name evidence="1" type="primary">rpsM</name>
    <name type="ordered locus">LAR_1370</name>
</gene>
<feature type="chain" id="PRO_1000141278" description="Small ribosomal subunit protein uS13">
    <location>
        <begin position="1"/>
        <end position="121"/>
    </location>
</feature>
<feature type="region of interest" description="Disordered" evidence="2">
    <location>
        <begin position="88"/>
        <end position="121"/>
    </location>
</feature>
<comment type="function">
    <text evidence="1">Located at the top of the head of the 30S subunit, it contacts several helices of the 16S rRNA. In the 70S ribosome it contacts the 23S rRNA (bridge B1a) and protein L5 of the 50S subunit (bridge B1b), connecting the 2 subunits; these bridges are implicated in subunit movement. Contacts the tRNAs in the A and P-sites.</text>
</comment>
<comment type="subunit">
    <text evidence="1">Part of the 30S ribosomal subunit. Forms a loose heterodimer with protein S19. Forms two bridges to the 50S subunit in the 70S ribosome.</text>
</comment>
<comment type="similarity">
    <text evidence="1">Belongs to the universal ribosomal protein uS13 family.</text>
</comment>
<accession>B2G8V4</accession>
<proteinExistence type="inferred from homology"/>
<dbReference type="EMBL" id="AP007281">
    <property type="protein sequence ID" value="BAG25886.1"/>
    <property type="molecule type" value="Genomic_DNA"/>
</dbReference>
<dbReference type="RefSeq" id="WP_003668778.1">
    <property type="nucleotide sequence ID" value="NC_010609.1"/>
</dbReference>
<dbReference type="SMR" id="B2G8V4"/>
<dbReference type="GeneID" id="77191455"/>
<dbReference type="KEGG" id="lrf:LAR_1370"/>
<dbReference type="HOGENOM" id="CLU_103849_1_1_9"/>
<dbReference type="GO" id="GO:0005829">
    <property type="term" value="C:cytosol"/>
    <property type="evidence" value="ECO:0007669"/>
    <property type="project" value="TreeGrafter"/>
</dbReference>
<dbReference type="GO" id="GO:0015935">
    <property type="term" value="C:small ribosomal subunit"/>
    <property type="evidence" value="ECO:0007669"/>
    <property type="project" value="TreeGrafter"/>
</dbReference>
<dbReference type="GO" id="GO:0019843">
    <property type="term" value="F:rRNA binding"/>
    <property type="evidence" value="ECO:0007669"/>
    <property type="project" value="UniProtKB-UniRule"/>
</dbReference>
<dbReference type="GO" id="GO:0003735">
    <property type="term" value="F:structural constituent of ribosome"/>
    <property type="evidence" value="ECO:0007669"/>
    <property type="project" value="InterPro"/>
</dbReference>
<dbReference type="GO" id="GO:0000049">
    <property type="term" value="F:tRNA binding"/>
    <property type="evidence" value="ECO:0007669"/>
    <property type="project" value="UniProtKB-UniRule"/>
</dbReference>
<dbReference type="GO" id="GO:0006412">
    <property type="term" value="P:translation"/>
    <property type="evidence" value="ECO:0007669"/>
    <property type="project" value="UniProtKB-UniRule"/>
</dbReference>
<dbReference type="FunFam" id="1.10.8.50:FF:000001">
    <property type="entry name" value="30S ribosomal protein S13"/>
    <property type="match status" value="1"/>
</dbReference>
<dbReference type="FunFam" id="4.10.910.10:FF:000001">
    <property type="entry name" value="30S ribosomal protein S13"/>
    <property type="match status" value="1"/>
</dbReference>
<dbReference type="Gene3D" id="1.10.8.50">
    <property type="match status" value="1"/>
</dbReference>
<dbReference type="Gene3D" id="4.10.910.10">
    <property type="entry name" value="30s ribosomal protein s13, domain 2"/>
    <property type="match status" value="1"/>
</dbReference>
<dbReference type="HAMAP" id="MF_01315">
    <property type="entry name" value="Ribosomal_uS13"/>
    <property type="match status" value="1"/>
</dbReference>
<dbReference type="InterPro" id="IPR027437">
    <property type="entry name" value="Rbsml_uS13_C"/>
</dbReference>
<dbReference type="InterPro" id="IPR001892">
    <property type="entry name" value="Ribosomal_uS13"/>
</dbReference>
<dbReference type="InterPro" id="IPR010979">
    <property type="entry name" value="Ribosomal_uS13-like_H2TH"/>
</dbReference>
<dbReference type="InterPro" id="IPR019980">
    <property type="entry name" value="Ribosomal_uS13_bac-type"/>
</dbReference>
<dbReference type="InterPro" id="IPR018269">
    <property type="entry name" value="Ribosomal_uS13_CS"/>
</dbReference>
<dbReference type="NCBIfam" id="TIGR03631">
    <property type="entry name" value="uS13_bact"/>
    <property type="match status" value="1"/>
</dbReference>
<dbReference type="PANTHER" id="PTHR10871">
    <property type="entry name" value="30S RIBOSOMAL PROTEIN S13/40S RIBOSOMAL PROTEIN S18"/>
    <property type="match status" value="1"/>
</dbReference>
<dbReference type="PANTHER" id="PTHR10871:SF1">
    <property type="entry name" value="SMALL RIBOSOMAL SUBUNIT PROTEIN US13M"/>
    <property type="match status" value="1"/>
</dbReference>
<dbReference type="Pfam" id="PF00416">
    <property type="entry name" value="Ribosomal_S13"/>
    <property type="match status" value="2"/>
</dbReference>
<dbReference type="PIRSF" id="PIRSF002134">
    <property type="entry name" value="Ribosomal_S13"/>
    <property type="match status" value="1"/>
</dbReference>
<dbReference type="SUPFAM" id="SSF46946">
    <property type="entry name" value="S13-like H2TH domain"/>
    <property type="match status" value="1"/>
</dbReference>
<dbReference type="PROSITE" id="PS00646">
    <property type="entry name" value="RIBOSOMAL_S13_1"/>
    <property type="match status" value="1"/>
</dbReference>
<dbReference type="PROSITE" id="PS50159">
    <property type="entry name" value="RIBOSOMAL_S13_2"/>
    <property type="match status" value="1"/>
</dbReference>
<name>RS13_LIMRJ</name>
<reference key="1">
    <citation type="journal article" date="2008" name="DNA Res.">
        <title>Comparative genome analysis of Lactobacillus reuteri and Lactobacillus fermentum reveal a genomic island for reuterin and cobalamin production.</title>
        <authorList>
            <person name="Morita H."/>
            <person name="Toh H."/>
            <person name="Fukuda S."/>
            <person name="Horikawa H."/>
            <person name="Oshima K."/>
            <person name="Suzuki T."/>
            <person name="Murakami M."/>
            <person name="Hisamatsu S."/>
            <person name="Kato Y."/>
            <person name="Takizawa T."/>
            <person name="Fukuoka H."/>
            <person name="Yoshimura T."/>
            <person name="Itoh K."/>
            <person name="O'Sullivan D.J."/>
            <person name="McKay L.L."/>
            <person name="Ohno H."/>
            <person name="Kikuchi J."/>
            <person name="Masaoka T."/>
            <person name="Hattori M."/>
        </authorList>
    </citation>
    <scope>NUCLEOTIDE SEQUENCE [LARGE SCALE GENOMIC DNA]</scope>
    <source>
        <strain>JCM 1112</strain>
    </source>
</reference>